<dbReference type="EMBL" id="CP000235">
    <property type="protein sequence ID" value="ABD44151.1"/>
    <property type="molecule type" value="Genomic_DNA"/>
</dbReference>
<dbReference type="RefSeq" id="WP_011451064.1">
    <property type="nucleotide sequence ID" value="NC_007797.1"/>
</dbReference>
<dbReference type="SMR" id="Q2GJA0"/>
<dbReference type="STRING" id="212042.APH_0988"/>
<dbReference type="PaxDb" id="212042-APH_0988"/>
<dbReference type="EnsemblBacteria" id="ABD44151">
    <property type="protein sequence ID" value="ABD44151"/>
    <property type="gene ID" value="APH_0988"/>
</dbReference>
<dbReference type="GeneID" id="92748068"/>
<dbReference type="KEGG" id="aph:APH_0988"/>
<dbReference type="eggNOG" id="COG0353">
    <property type="taxonomic scope" value="Bacteria"/>
</dbReference>
<dbReference type="HOGENOM" id="CLU_060739_1_1_5"/>
<dbReference type="Proteomes" id="UP000001943">
    <property type="component" value="Chromosome"/>
</dbReference>
<dbReference type="GO" id="GO:0003677">
    <property type="term" value="F:DNA binding"/>
    <property type="evidence" value="ECO:0007669"/>
    <property type="project" value="UniProtKB-UniRule"/>
</dbReference>
<dbReference type="GO" id="GO:0008270">
    <property type="term" value="F:zinc ion binding"/>
    <property type="evidence" value="ECO:0007669"/>
    <property type="project" value="UniProtKB-KW"/>
</dbReference>
<dbReference type="GO" id="GO:0006310">
    <property type="term" value="P:DNA recombination"/>
    <property type="evidence" value="ECO:0007669"/>
    <property type="project" value="UniProtKB-UniRule"/>
</dbReference>
<dbReference type="GO" id="GO:0006281">
    <property type="term" value="P:DNA repair"/>
    <property type="evidence" value="ECO:0007669"/>
    <property type="project" value="UniProtKB-UniRule"/>
</dbReference>
<dbReference type="CDD" id="cd01025">
    <property type="entry name" value="TOPRIM_recR"/>
    <property type="match status" value="1"/>
</dbReference>
<dbReference type="Gene3D" id="3.40.1360.10">
    <property type="match status" value="1"/>
</dbReference>
<dbReference type="Gene3D" id="1.10.8.420">
    <property type="entry name" value="RecR Domain 1"/>
    <property type="match status" value="1"/>
</dbReference>
<dbReference type="HAMAP" id="MF_00017">
    <property type="entry name" value="RecR"/>
    <property type="match status" value="1"/>
</dbReference>
<dbReference type="InterPro" id="IPR000093">
    <property type="entry name" value="DNA_Rcmb_RecR"/>
</dbReference>
<dbReference type="InterPro" id="IPR023627">
    <property type="entry name" value="Rcmb_RecR"/>
</dbReference>
<dbReference type="InterPro" id="IPR015967">
    <property type="entry name" value="Rcmb_RecR_Znf"/>
</dbReference>
<dbReference type="InterPro" id="IPR006171">
    <property type="entry name" value="TOPRIM_dom"/>
</dbReference>
<dbReference type="InterPro" id="IPR034137">
    <property type="entry name" value="TOPRIM_RecR"/>
</dbReference>
<dbReference type="NCBIfam" id="TIGR00615">
    <property type="entry name" value="recR"/>
    <property type="match status" value="1"/>
</dbReference>
<dbReference type="PANTHER" id="PTHR30446">
    <property type="entry name" value="RECOMBINATION PROTEIN RECR"/>
    <property type="match status" value="1"/>
</dbReference>
<dbReference type="PANTHER" id="PTHR30446:SF0">
    <property type="entry name" value="RECOMBINATION PROTEIN RECR"/>
    <property type="match status" value="1"/>
</dbReference>
<dbReference type="Pfam" id="PF21175">
    <property type="entry name" value="RecR_C"/>
    <property type="match status" value="1"/>
</dbReference>
<dbReference type="Pfam" id="PF21176">
    <property type="entry name" value="RecR_HhH"/>
    <property type="match status" value="1"/>
</dbReference>
<dbReference type="Pfam" id="PF02132">
    <property type="entry name" value="RecR_ZnF"/>
    <property type="match status" value="1"/>
</dbReference>
<dbReference type="Pfam" id="PF13662">
    <property type="entry name" value="Toprim_4"/>
    <property type="match status" value="1"/>
</dbReference>
<dbReference type="SMART" id="SM00493">
    <property type="entry name" value="TOPRIM"/>
    <property type="match status" value="1"/>
</dbReference>
<dbReference type="SUPFAM" id="SSF111304">
    <property type="entry name" value="Recombination protein RecR"/>
    <property type="match status" value="1"/>
</dbReference>
<dbReference type="PROSITE" id="PS01300">
    <property type="entry name" value="RECR"/>
    <property type="match status" value="1"/>
</dbReference>
<dbReference type="PROSITE" id="PS50880">
    <property type="entry name" value="TOPRIM"/>
    <property type="match status" value="1"/>
</dbReference>
<feature type="chain" id="PRO_0000322859" description="Recombination protein RecR">
    <location>
        <begin position="1"/>
        <end position="194"/>
    </location>
</feature>
<feature type="domain" description="Toprim" evidence="1">
    <location>
        <begin position="76"/>
        <end position="171"/>
    </location>
</feature>
<feature type="zinc finger region" description="C4-type" evidence="1">
    <location>
        <begin position="53"/>
        <end position="68"/>
    </location>
</feature>
<accession>Q2GJA0</accession>
<protein>
    <recommendedName>
        <fullName evidence="1">Recombination protein RecR</fullName>
    </recommendedName>
</protein>
<keyword id="KW-0227">DNA damage</keyword>
<keyword id="KW-0233">DNA recombination</keyword>
<keyword id="KW-0234">DNA repair</keyword>
<keyword id="KW-0479">Metal-binding</keyword>
<keyword id="KW-0862">Zinc</keyword>
<keyword id="KW-0863">Zinc-finger</keyword>
<name>RECR_ANAPZ</name>
<organism>
    <name type="scientific">Anaplasma phagocytophilum (strain HZ)</name>
    <dbReference type="NCBI Taxonomy" id="212042"/>
    <lineage>
        <taxon>Bacteria</taxon>
        <taxon>Pseudomonadati</taxon>
        <taxon>Pseudomonadota</taxon>
        <taxon>Alphaproteobacteria</taxon>
        <taxon>Rickettsiales</taxon>
        <taxon>Anaplasmataceae</taxon>
        <taxon>Anaplasma</taxon>
        <taxon>phagocytophilum group</taxon>
    </lineage>
</organism>
<reference key="1">
    <citation type="journal article" date="2006" name="PLoS Genet.">
        <title>Comparative genomics of emerging human ehrlichiosis agents.</title>
        <authorList>
            <person name="Dunning Hotopp J.C."/>
            <person name="Lin M."/>
            <person name="Madupu R."/>
            <person name="Crabtree J."/>
            <person name="Angiuoli S.V."/>
            <person name="Eisen J.A."/>
            <person name="Seshadri R."/>
            <person name="Ren Q."/>
            <person name="Wu M."/>
            <person name="Utterback T.R."/>
            <person name="Smith S."/>
            <person name="Lewis M."/>
            <person name="Khouri H."/>
            <person name="Zhang C."/>
            <person name="Niu H."/>
            <person name="Lin Q."/>
            <person name="Ohashi N."/>
            <person name="Zhi N."/>
            <person name="Nelson W.C."/>
            <person name="Brinkac L.M."/>
            <person name="Dodson R.J."/>
            <person name="Rosovitz M.J."/>
            <person name="Sundaram J.P."/>
            <person name="Daugherty S.C."/>
            <person name="Davidsen T."/>
            <person name="Durkin A.S."/>
            <person name="Gwinn M.L."/>
            <person name="Haft D.H."/>
            <person name="Selengut J.D."/>
            <person name="Sullivan S.A."/>
            <person name="Zafar N."/>
            <person name="Zhou L."/>
            <person name="Benahmed F."/>
            <person name="Forberger H."/>
            <person name="Halpin R."/>
            <person name="Mulligan S."/>
            <person name="Robinson J."/>
            <person name="White O."/>
            <person name="Rikihisa Y."/>
            <person name="Tettelin H."/>
        </authorList>
    </citation>
    <scope>NUCLEOTIDE SEQUENCE [LARGE SCALE GENOMIC DNA]</scope>
    <source>
        <strain>HZ</strain>
    </source>
</reference>
<proteinExistence type="inferred from homology"/>
<gene>
    <name evidence="1" type="primary">recR</name>
    <name type="ordered locus">APH_0988</name>
</gene>
<sequence>MDISRLISLFSKLPGLGPASSRRIVLHLLRHRHDVMTPLANGIRELEESTKECEICFNLDVTSPCSICTDSRRDKSLLCIVEELGDLWAFEKGRIYQGMYHVLGGVLSALSGVGPEDLNMSSIPERVRLHGVKEVIVATGSDMDGQVTCHYIAQSIKSTGVKVTRLACGIPLGGEIDYLDEGTLRAALSSRYII</sequence>
<comment type="function">
    <text evidence="1">May play a role in DNA repair. It seems to be involved in an RecBC-independent recombinational process of DNA repair. It may act with RecF and RecO.</text>
</comment>
<comment type="similarity">
    <text evidence="1">Belongs to the RecR family.</text>
</comment>
<evidence type="ECO:0000255" key="1">
    <source>
        <dbReference type="HAMAP-Rule" id="MF_00017"/>
    </source>
</evidence>